<proteinExistence type="inferred from homology"/>
<evidence type="ECO:0000255" key="1">
    <source>
        <dbReference type="HAMAP-Rule" id="MF_01849"/>
    </source>
</evidence>
<evidence type="ECO:0000255" key="2">
    <source>
        <dbReference type="PROSITE-ProRule" id="PRU01266"/>
    </source>
</evidence>
<sequence>MESHKIQLLGLDLSQLERLALDHGESLYRGRQLHQWLYQKGVDNLDDITVLPKAWRNSLIQKGISVGGLVEVNRFIAGDRTIKLLLSTGDGEIIETVGIPSGNRLTICVSSQIGCPMGCQFCATGKDGLKRSLKVNEIVAQVFAVKKAFNRSPSNVVFMGMGEPLLNIEEVLSSICCLNKDLGIGQRRITVSTVGVKNTLPQLAELALQFLGSVQFTLALSLHAPNQKLRESLIPSAQNYPIKLLLEDCRHYLDLTGRRVSFEYILLGHLNDHIEHAEELADLVGGFQSHVNLIAYNPIDGESFQRPSNQRVNIFIKTLQKRGIVVSLRASRGLDKNAACGQLRSMNM</sequence>
<gene>
    <name evidence="1" type="primary">rlmN</name>
    <name type="ordered locus">Pro_1636</name>
</gene>
<accession>Q7VA32</accession>
<feature type="chain" id="PRO_0000350312" description="Probable dual-specificity RNA methyltransferase RlmN">
    <location>
        <begin position="1"/>
        <end position="348"/>
    </location>
</feature>
<feature type="domain" description="Radical SAM core" evidence="2">
    <location>
        <begin position="101"/>
        <end position="335"/>
    </location>
</feature>
<feature type="active site" description="Proton acceptor" evidence="1">
    <location>
        <position position="95"/>
    </location>
</feature>
<feature type="active site" description="S-methylcysteine intermediate" evidence="1">
    <location>
        <position position="340"/>
    </location>
</feature>
<feature type="binding site" evidence="1">
    <location>
        <position position="115"/>
    </location>
    <ligand>
        <name>[4Fe-4S] cluster</name>
        <dbReference type="ChEBI" id="CHEBI:49883"/>
        <note>4Fe-4S-S-AdoMet</note>
    </ligand>
</feature>
<feature type="binding site" evidence="1">
    <location>
        <position position="119"/>
    </location>
    <ligand>
        <name>[4Fe-4S] cluster</name>
        <dbReference type="ChEBI" id="CHEBI:49883"/>
        <note>4Fe-4S-S-AdoMet</note>
    </ligand>
</feature>
<feature type="binding site" evidence="1">
    <location>
        <position position="122"/>
    </location>
    <ligand>
        <name>[4Fe-4S] cluster</name>
        <dbReference type="ChEBI" id="CHEBI:49883"/>
        <note>4Fe-4S-S-AdoMet</note>
    </ligand>
</feature>
<feature type="binding site" evidence="1">
    <location>
        <begin position="162"/>
        <end position="163"/>
    </location>
    <ligand>
        <name>S-adenosyl-L-methionine</name>
        <dbReference type="ChEBI" id="CHEBI:59789"/>
    </ligand>
</feature>
<feature type="binding site" evidence="1">
    <location>
        <position position="192"/>
    </location>
    <ligand>
        <name>S-adenosyl-L-methionine</name>
        <dbReference type="ChEBI" id="CHEBI:59789"/>
    </ligand>
</feature>
<feature type="binding site" evidence="1">
    <location>
        <begin position="221"/>
        <end position="223"/>
    </location>
    <ligand>
        <name>S-adenosyl-L-methionine</name>
        <dbReference type="ChEBI" id="CHEBI:59789"/>
    </ligand>
</feature>
<feature type="binding site" evidence="1">
    <location>
        <position position="297"/>
    </location>
    <ligand>
        <name>S-adenosyl-L-methionine</name>
        <dbReference type="ChEBI" id="CHEBI:59789"/>
    </ligand>
</feature>
<feature type="disulfide bond" description="(transient)" evidence="1">
    <location>
        <begin position="108"/>
        <end position="340"/>
    </location>
</feature>
<keyword id="KW-0004">4Fe-4S</keyword>
<keyword id="KW-0963">Cytoplasm</keyword>
<keyword id="KW-1015">Disulfide bond</keyword>
<keyword id="KW-0408">Iron</keyword>
<keyword id="KW-0411">Iron-sulfur</keyword>
<keyword id="KW-0479">Metal-binding</keyword>
<keyword id="KW-0489">Methyltransferase</keyword>
<keyword id="KW-1185">Reference proteome</keyword>
<keyword id="KW-0698">rRNA processing</keyword>
<keyword id="KW-0949">S-adenosyl-L-methionine</keyword>
<keyword id="KW-0808">Transferase</keyword>
<keyword id="KW-0819">tRNA processing</keyword>
<organism>
    <name type="scientific">Prochlorococcus marinus (strain SARG / CCMP1375 / SS120)</name>
    <dbReference type="NCBI Taxonomy" id="167539"/>
    <lineage>
        <taxon>Bacteria</taxon>
        <taxon>Bacillati</taxon>
        <taxon>Cyanobacteriota</taxon>
        <taxon>Cyanophyceae</taxon>
        <taxon>Synechococcales</taxon>
        <taxon>Prochlorococcaceae</taxon>
        <taxon>Prochlorococcus</taxon>
    </lineage>
</organism>
<protein>
    <recommendedName>
        <fullName evidence="1">Probable dual-specificity RNA methyltransferase RlmN</fullName>
        <ecNumber evidence="1">2.1.1.192</ecNumber>
    </recommendedName>
    <alternativeName>
        <fullName evidence="1">23S rRNA (adenine(2503)-C(2))-methyltransferase</fullName>
    </alternativeName>
    <alternativeName>
        <fullName evidence="1">23S rRNA m2A2503 methyltransferase</fullName>
    </alternativeName>
    <alternativeName>
        <fullName evidence="1">Ribosomal RNA large subunit methyltransferase N</fullName>
    </alternativeName>
    <alternativeName>
        <fullName evidence="1">tRNA (adenine(37)-C(2))-methyltransferase</fullName>
    </alternativeName>
    <alternativeName>
        <fullName evidence="1">tRNA m2A37 methyltransferase</fullName>
    </alternativeName>
</protein>
<comment type="function">
    <text evidence="1">Specifically methylates position 2 of adenine 2503 in 23S rRNA and position 2 of adenine 37 in tRNAs.</text>
</comment>
<comment type="catalytic activity">
    <reaction evidence="1">
        <text>adenosine(2503) in 23S rRNA + 2 reduced [2Fe-2S]-[ferredoxin] + 2 S-adenosyl-L-methionine = 2-methyladenosine(2503) in 23S rRNA + 5'-deoxyadenosine + L-methionine + 2 oxidized [2Fe-2S]-[ferredoxin] + S-adenosyl-L-homocysteine</text>
        <dbReference type="Rhea" id="RHEA:42916"/>
        <dbReference type="Rhea" id="RHEA-COMP:10000"/>
        <dbReference type="Rhea" id="RHEA-COMP:10001"/>
        <dbReference type="Rhea" id="RHEA-COMP:10152"/>
        <dbReference type="Rhea" id="RHEA-COMP:10282"/>
        <dbReference type="ChEBI" id="CHEBI:17319"/>
        <dbReference type="ChEBI" id="CHEBI:33737"/>
        <dbReference type="ChEBI" id="CHEBI:33738"/>
        <dbReference type="ChEBI" id="CHEBI:57844"/>
        <dbReference type="ChEBI" id="CHEBI:57856"/>
        <dbReference type="ChEBI" id="CHEBI:59789"/>
        <dbReference type="ChEBI" id="CHEBI:74411"/>
        <dbReference type="ChEBI" id="CHEBI:74497"/>
        <dbReference type="EC" id="2.1.1.192"/>
    </reaction>
</comment>
<comment type="catalytic activity">
    <reaction evidence="1">
        <text>adenosine(37) in tRNA + 2 reduced [2Fe-2S]-[ferredoxin] + 2 S-adenosyl-L-methionine = 2-methyladenosine(37) in tRNA + 5'-deoxyadenosine + L-methionine + 2 oxidized [2Fe-2S]-[ferredoxin] + S-adenosyl-L-homocysteine</text>
        <dbReference type="Rhea" id="RHEA:43332"/>
        <dbReference type="Rhea" id="RHEA-COMP:10000"/>
        <dbReference type="Rhea" id="RHEA-COMP:10001"/>
        <dbReference type="Rhea" id="RHEA-COMP:10162"/>
        <dbReference type="Rhea" id="RHEA-COMP:10485"/>
        <dbReference type="ChEBI" id="CHEBI:17319"/>
        <dbReference type="ChEBI" id="CHEBI:33737"/>
        <dbReference type="ChEBI" id="CHEBI:33738"/>
        <dbReference type="ChEBI" id="CHEBI:57844"/>
        <dbReference type="ChEBI" id="CHEBI:57856"/>
        <dbReference type="ChEBI" id="CHEBI:59789"/>
        <dbReference type="ChEBI" id="CHEBI:74411"/>
        <dbReference type="ChEBI" id="CHEBI:74497"/>
        <dbReference type="EC" id="2.1.1.192"/>
    </reaction>
</comment>
<comment type="cofactor">
    <cofactor evidence="1">
        <name>[4Fe-4S] cluster</name>
        <dbReference type="ChEBI" id="CHEBI:49883"/>
    </cofactor>
    <text evidence="1">Binds 1 [4Fe-4S] cluster. The cluster is coordinated with 3 cysteines and an exchangeable S-adenosyl-L-methionine.</text>
</comment>
<comment type="subcellular location">
    <subcellularLocation>
        <location evidence="1">Cytoplasm</location>
    </subcellularLocation>
</comment>
<comment type="miscellaneous">
    <text evidence="1">Reaction proceeds by a ping-pong mechanism involving intermediate methylation of a conserved cysteine residue.</text>
</comment>
<comment type="similarity">
    <text evidence="1">Belongs to the radical SAM superfamily. RlmN family.</text>
</comment>
<reference key="1">
    <citation type="journal article" date="2003" name="Proc. Natl. Acad. Sci. U.S.A.">
        <title>Genome sequence of the cyanobacterium Prochlorococcus marinus SS120, a nearly minimal oxyphototrophic genome.</title>
        <authorList>
            <person name="Dufresne A."/>
            <person name="Salanoubat M."/>
            <person name="Partensky F."/>
            <person name="Artiguenave F."/>
            <person name="Axmann I.M."/>
            <person name="Barbe V."/>
            <person name="Duprat S."/>
            <person name="Galperin M.Y."/>
            <person name="Koonin E.V."/>
            <person name="Le Gall F."/>
            <person name="Makarova K.S."/>
            <person name="Ostrowski M."/>
            <person name="Oztas S."/>
            <person name="Robert C."/>
            <person name="Rogozin I.B."/>
            <person name="Scanlan D.J."/>
            <person name="Tandeau de Marsac N."/>
            <person name="Weissenbach J."/>
            <person name="Wincker P."/>
            <person name="Wolf Y.I."/>
            <person name="Hess W.R."/>
        </authorList>
    </citation>
    <scope>NUCLEOTIDE SEQUENCE [LARGE SCALE GENOMIC DNA]</scope>
    <source>
        <strain>SARG / CCMP1375 / SS120</strain>
    </source>
</reference>
<name>RLMN_PROMA</name>
<dbReference type="EC" id="2.1.1.192" evidence="1"/>
<dbReference type="EMBL" id="AE017126">
    <property type="protein sequence ID" value="AAQ00680.1"/>
    <property type="molecule type" value="Genomic_DNA"/>
</dbReference>
<dbReference type="RefSeq" id="NP_876027.1">
    <property type="nucleotide sequence ID" value="NC_005042.1"/>
</dbReference>
<dbReference type="SMR" id="Q7VA32"/>
<dbReference type="STRING" id="167539.Pro_1636"/>
<dbReference type="EnsemblBacteria" id="AAQ00680">
    <property type="protein sequence ID" value="AAQ00680"/>
    <property type="gene ID" value="Pro_1636"/>
</dbReference>
<dbReference type="KEGG" id="pma:Pro_1636"/>
<dbReference type="PATRIC" id="fig|167539.5.peg.1730"/>
<dbReference type="eggNOG" id="COG0820">
    <property type="taxonomic scope" value="Bacteria"/>
</dbReference>
<dbReference type="HOGENOM" id="CLU_029101_1_1_3"/>
<dbReference type="OrthoDB" id="9793973at2"/>
<dbReference type="Proteomes" id="UP000001420">
    <property type="component" value="Chromosome"/>
</dbReference>
<dbReference type="GO" id="GO:0005737">
    <property type="term" value="C:cytoplasm"/>
    <property type="evidence" value="ECO:0007669"/>
    <property type="project" value="UniProtKB-SubCell"/>
</dbReference>
<dbReference type="GO" id="GO:0051539">
    <property type="term" value="F:4 iron, 4 sulfur cluster binding"/>
    <property type="evidence" value="ECO:0007669"/>
    <property type="project" value="UniProtKB-UniRule"/>
</dbReference>
<dbReference type="GO" id="GO:0046872">
    <property type="term" value="F:metal ion binding"/>
    <property type="evidence" value="ECO:0007669"/>
    <property type="project" value="UniProtKB-KW"/>
</dbReference>
<dbReference type="GO" id="GO:0070040">
    <property type="term" value="F:rRNA (adenine(2503)-C2-)-methyltransferase activity"/>
    <property type="evidence" value="ECO:0007669"/>
    <property type="project" value="UniProtKB-UniRule"/>
</dbReference>
<dbReference type="GO" id="GO:0019843">
    <property type="term" value="F:rRNA binding"/>
    <property type="evidence" value="ECO:0007669"/>
    <property type="project" value="UniProtKB-UniRule"/>
</dbReference>
<dbReference type="GO" id="GO:0002935">
    <property type="term" value="F:tRNA (adenine(37)-C2)-methyltransferase activity"/>
    <property type="evidence" value="ECO:0007669"/>
    <property type="project" value="UniProtKB-UniRule"/>
</dbReference>
<dbReference type="GO" id="GO:0000049">
    <property type="term" value="F:tRNA binding"/>
    <property type="evidence" value="ECO:0007669"/>
    <property type="project" value="UniProtKB-UniRule"/>
</dbReference>
<dbReference type="GO" id="GO:0070475">
    <property type="term" value="P:rRNA base methylation"/>
    <property type="evidence" value="ECO:0007669"/>
    <property type="project" value="UniProtKB-UniRule"/>
</dbReference>
<dbReference type="GO" id="GO:0030488">
    <property type="term" value="P:tRNA methylation"/>
    <property type="evidence" value="ECO:0007669"/>
    <property type="project" value="UniProtKB-UniRule"/>
</dbReference>
<dbReference type="CDD" id="cd01335">
    <property type="entry name" value="Radical_SAM"/>
    <property type="match status" value="1"/>
</dbReference>
<dbReference type="FunFam" id="3.20.20.70:FF:000014">
    <property type="entry name" value="Probable dual-specificity RNA methyltransferase RlmN"/>
    <property type="match status" value="1"/>
</dbReference>
<dbReference type="Gene3D" id="1.10.150.530">
    <property type="match status" value="1"/>
</dbReference>
<dbReference type="Gene3D" id="3.20.20.70">
    <property type="entry name" value="Aldolase class I"/>
    <property type="match status" value="1"/>
</dbReference>
<dbReference type="HAMAP" id="MF_01849">
    <property type="entry name" value="RNA_methyltr_RlmN"/>
    <property type="match status" value="1"/>
</dbReference>
<dbReference type="InterPro" id="IPR013785">
    <property type="entry name" value="Aldolase_TIM"/>
</dbReference>
<dbReference type="InterPro" id="IPR040072">
    <property type="entry name" value="Methyltransferase_A"/>
</dbReference>
<dbReference type="InterPro" id="IPR048641">
    <property type="entry name" value="RlmN_N"/>
</dbReference>
<dbReference type="InterPro" id="IPR027492">
    <property type="entry name" value="RNA_MTrfase_RlmN"/>
</dbReference>
<dbReference type="InterPro" id="IPR004383">
    <property type="entry name" value="rRNA_lsu_MTrfase_RlmN/Cfr"/>
</dbReference>
<dbReference type="InterPro" id="IPR007197">
    <property type="entry name" value="rSAM"/>
</dbReference>
<dbReference type="NCBIfam" id="TIGR00048">
    <property type="entry name" value="rRNA_mod_RlmN"/>
    <property type="match status" value="1"/>
</dbReference>
<dbReference type="PANTHER" id="PTHR30544">
    <property type="entry name" value="23S RRNA METHYLTRANSFERASE"/>
    <property type="match status" value="1"/>
</dbReference>
<dbReference type="PANTHER" id="PTHR30544:SF5">
    <property type="entry name" value="RADICAL SAM CORE DOMAIN-CONTAINING PROTEIN"/>
    <property type="match status" value="1"/>
</dbReference>
<dbReference type="Pfam" id="PF04055">
    <property type="entry name" value="Radical_SAM"/>
    <property type="match status" value="1"/>
</dbReference>
<dbReference type="Pfam" id="PF21016">
    <property type="entry name" value="RlmN_N"/>
    <property type="match status" value="1"/>
</dbReference>
<dbReference type="PIRSF" id="PIRSF006004">
    <property type="entry name" value="CHP00048"/>
    <property type="match status" value="1"/>
</dbReference>
<dbReference type="SFLD" id="SFLDF00275">
    <property type="entry name" value="adenosine_C2_methyltransferase"/>
    <property type="match status" value="1"/>
</dbReference>
<dbReference type="SFLD" id="SFLDS00029">
    <property type="entry name" value="Radical_SAM"/>
    <property type="match status" value="1"/>
</dbReference>
<dbReference type="SUPFAM" id="SSF102114">
    <property type="entry name" value="Radical SAM enzymes"/>
    <property type="match status" value="1"/>
</dbReference>
<dbReference type="PROSITE" id="PS51918">
    <property type="entry name" value="RADICAL_SAM"/>
    <property type="match status" value="1"/>
</dbReference>